<accession>Q7MT92</accession>
<protein>
    <recommendedName>
        <fullName evidence="1">Ribosomal RNA large subunit methyltransferase H</fullName>
        <ecNumber evidence="1">2.1.1.177</ecNumber>
    </recommendedName>
    <alternativeName>
        <fullName evidence="1">23S rRNA (pseudouridine1915-N3)-methyltransferase</fullName>
    </alternativeName>
    <alternativeName>
        <fullName evidence="1">23S rRNA m3Psi1915 methyltransferase</fullName>
    </alternativeName>
    <alternativeName>
        <fullName evidence="1">rRNA (pseudouridine-N3-)-methyltransferase RlmH</fullName>
    </alternativeName>
</protein>
<comment type="function">
    <text evidence="1">Specifically methylates the pseudouridine at position 1915 (m3Psi1915) in 23S rRNA.</text>
</comment>
<comment type="catalytic activity">
    <reaction evidence="1">
        <text>pseudouridine(1915) in 23S rRNA + S-adenosyl-L-methionine = N(3)-methylpseudouridine(1915) in 23S rRNA + S-adenosyl-L-homocysteine + H(+)</text>
        <dbReference type="Rhea" id="RHEA:42752"/>
        <dbReference type="Rhea" id="RHEA-COMP:10221"/>
        <dbReference type="Rhea" id="RHEA-COMP:10222"/>
        <dbReference type="ChEBI" id="CHEBI:15378"/>
        <dbReference type="ChEBI" id="CHEBI:57856"/>
        <dbReference type="ChEBI" id="CHEBI:59789"/>
        <dbReference type="ChEBI" id="CHEBI:65314"/>
        <dbReference type="ChEBI" id="CHEBI:74486"/>
        <dbReference type="EC" id="2.1.1.177"/>
    </reaction>
</comment>
<comment type="subunit">
    <text evidence="1">Homodimer.</text>
</comment>
<comment type="subcellular location">
    <subcellularLocation>
        <location evidence="1">Cytoplasm</location>
    </subcellularLocation>
</comment>
<comment type="similarity">
    <text evidence="1">Belongs to the RNA methyltransferase RlmH family.</text>
</comment>
<feature type="chain" id="PRO_0000198158" description="Ribosomal RNA large subunit methyltransferase H">
    <location>
        <begin position="1"/>
        <end position="157"/>
    </location>
</feature>
<feature type="binding site" evidence="1">
    <location>
        <position position="73"/>
    </location>
    <ligand>
        <name>S-adenosyl-L-methionine</name>
        <dbReference type="ChEBI" id="CHEBI:59789"/>
    </ligand>
</feature>
<feature type="binding site" evidence="1">
    <location>
        <position position="105"/>
    </location>
    <ligand>
        <name>S-adenosyl-L-methionine</name>
        <dbReference type="ChEBI" id="CHEBI:59789"/>
    </ligand>
</feature>
<feature type="binding site" evidence="1">
    <location>
        <begin position="124"/>
        <end position="129"/>
    </location>
    <ligand>
        <name>S-adenosyl-L-methionine</name>
        <dbReference type="ChEBI" id="CHEBI:59789"/>
    </ligand>
</feature>
<name>RLMH_PORGI</name>
<dbReference type="EC" id="2.1.1.177" evidence="1"/>
<dbReference type="EMBL" id="AE015924">
    <property type="protein sequence ID" value="AAQ67047.1"/>
    <property type="molecule type" value="Genomic_DNA"/>
</dbReference>
<dbReference type="RefSeq" id="WP_004584700.1">
    <property type="nucleotide sequence ID" value="NC_002950.2"/>
</dbReference>
<dbReference type="SMR" id="Q7MT92"/>
<dbReference type="STRING" id="242619.PG_2087"/>
<dbReference type="EnsemblBacteria" id="AAQ67047">
    <property type="protein sequence ID" value="AAQ67047"/>
    <property type="gene ID" value="PG_2087"/>
</dbReference>
<dbReference type="KEGG" id="pgi:PG_2087"/>
<dbReference type="PATRIC" id="fig|242619.8.peg.1941"/>
<dbReference type="eggNOG" id="COG1576">
    <property type="taxonomic scope" value="Bacteria"/>
</dbReference>
<dbReference type="HOGENOM" id="CLU_100552_2_0_10"/>
<dbReference type="BioCyc" id="PGIN242619:G1G02-1960-MONOMER"/>
<dbReference type="Proteomes" id="UP000000588">
    <property type="component" value="Chromosome"/>
</dbReference>
<dbReference type="GO" id="GO:0005737">
    <property type="term" value="C:cytoplasm"/>
    <property type="evidence" value="ECO:0007669"/>
    <property type="project" value="UniProtKB-SubCell"/>
</dbReference>
<dbReference type="GO" id="GO:0070038">
    <property type="term" value="F:rRNA (pseudouridine-N3-)-methyltransferase activity"/>
    <property type="evidence" value="ECO:0007669"/>
    <property type="project" value="UniProtKB-UniRule"/>
</dbReference>
<dbReference type="CDD" id="cd18081">
    <property type="entry name" value="RlmH-like"/>
    <property type="match status" value="1"/>
</dbReference>
<dbReference type="Gene3D" id="3.40.1280.10">
    <property type="match status" value="1"/>
</dbReference>
<dbReference type="HAMAP" id="MF_00658">
    <property type="entry name" value="23SrRNA_methyltr_H"/>
    <property type="match status" value="1"/>
</dbReference>
<dbReference type="InterPro" id="IPR029028">
    <property type="entry name" value="Alpha/beta_knot_MTases"/>
</dbReference>
<dbReference type="InterPro" id="IPR003742">
    <property type="entry name" value="RlmH-like"/>
</dbReference>
<dbReference type="InterPro" id="IPR029026">
    <property type="entry name" value="tRNA_m1G_MTases_N"/>
</dbReference>
<dbReference type="NCBIfam" id="NF000990">
    <property type="entry name" value="PRK00103.2-4"/>
    <property type="match status" value="1"/>
</dbReference>
<dbReference type="PANTHER" id="PTHR33603">
    <property type="entry name" value="METHYLTRANSFERASE"/>
    <property type="match status" value="1"/>
</dbReference>
<dbReference type="PANTHER" id="PTHR33603:SF1">
    <property type="entry name" value="RIBOSOMAL RNA LARGE SUBUNIT METHYLTRANSFERASE H"/>
    <property type="match status" value="1"/>
</dbReference>
<dbReference type="Pfam" id="PF02590">
    <property type="entry name" value="SPOUT_MTase"/>
    <property type="match status" value="1"/>
</dbReference>
<dbReference type="PIRSF" id="PIRSF004505">
    <property type="entry name" value="MT_bac"/>
    <property type="match status" value="1"/>
</dbReference>
<dbReference type="SUPFAM" id="SSF75217">
    <property type="entry name" value="alpha/beta knot"/>
    <property type="match status" value="1"/>
</dbReference>
<organism>
    <name type="scientific">Porphyromonas gingivalis (strain ATCC BAA-308 / W83)</name>
    <dbReference type="NCBI Taxonomy" id="242619"/>
    <lineage>
        <taxon>Bacteria</taxon>
        <taxon>Pseudomonadati</taxon>
        <taxon>Bacteroidota</taxon>
        <taxon>Bacteroidia</taxon>
        <taxon>Bacteroidales</taxon>
        <taxon>Porphyromonadaceae</taxon>
        <taxon>Porphyromonas</taxon>
    </lineage>
</organism>
<evidence type="ECO:0000255" key="1">
    <source>
        <dbReference type="HAMAP-Rule" id="MF_00658"/>
    </source>
</evidence>
<reference key="1">
    <citation type="journal article" date="2003" name="J. Bacteriol.">
        <title>Complete genome sequence of the oral pathogenic bacterium Porphyromonas gingivalis strain W83.</title>
        <authorList>
            <person name="Nelson K.E."/>
            <person name="Fleischmann R.D."/>
            <person name="DeBoy R.T."/>
            <person name="Paulsen I.T."/>
            <person name="Fouts D.E."/>
            <person name="Eisen J.A."/>
            <person name="Daugherty S.C."/>
            <person name="Dodson R.J."/>
            <person name="Durkin A.S."/>
            <person name="Gwinn M.L."/>
            <person name="Haft D.H."/>
            <person name="Kolonay J.F."/>
            <person name="Nelson W.C."/>
            <person name="Mason T.M."/>
            <person name="Tallon L."/>
            <person name="Gray J."/>
            <person name="Granger D."/>
            <person name="Tettelin H."/>
            <person name="Dong H."/>
            <person name="Galvin J.L."/>
            <person name="Duncan M.J."/>
            <person name="Dewhirst F.E."/>
            <person name="Fraser C.M."/>
        </authorList>
    </citation>
    <scope>NUCLEOTIDE SEQUENCE [LARGE SCALE GENOMIC DNA]</scope>
    <source>
        <strain>ATCC BAA-308 / W83</strain>
    </source>
</reference>
<proteinExistence type="inferred from homology"/>
<keyword id="KW-0963">Cytoplasm</keyword>
<keyword id="KW-0489">Methyltransferase</keyword>
<keyword id="KW-1185">Reference proteome</keyword>
<keyword id="KW-0698">rRNA processing</keyword>
<keyword id="KW-0949">S-adenosyl-L-methionine</keyword>
<keyword id="KW-0808">Transferase</keyword>
<gene>
    <name evidence="1" type="primary">rlmH</name>
    <name type="ordered locus">PG_2087</name>
</gene>
<sequence length="157" mass="18161">MKIVLLVVGKTDSKLMVQATEEYIRRLSHYVSFEVEVIPDVRLGSKLSSEQQKDAEGREILARLRPSDSTVLLDERGREYSSMEFSAFLQKKMLIGTRRMVFVIGGPYGFSPAVQEAVTDRISLSRMTFSHQMIRLFFTEQVYRAMTILNHEPYHHE</sequence>